<comment type="function">
    <text evidence="3">Involved in terpene biosynthesis in roots. Possesses sesquiterpene (C15) synthase activity in vitro. Does not seem to be involved in diterpene (C20) biosynthesis.</text>
</comment>
<comment type="cofactor">
    <cofactor evidence="1">
        <name>Mg(2+)</name>
        <dbReference type="ChEBI" id="CHEBI:18420"/>
    </cofactor>
    <cofactor evidence="1">
        <name>Mn(2+)</name>
        <dbReference type="ChEBI" id="CHEBI:29035"/>
    </cofactor>
    <text evidence="1">Binds 3 Mg(2+) or Mn(2+) ions per subunit.</text>
</comment>
<comment type="pathway">
    <text evidence="5">Secondary metabolite biosynthesis; terpenoid biosynthesis.</text>
</comment>
<comment type="subcellular location">
    <subcellularLocation>
        <location evidence="5">Cytoplasm</location>
    </subcellularLocation>
</comment>
<comment type="tissue specificity">
    <text evidence="2">Predominantly expressed in siliques but also in flowers.</text>
</comment>
<comment type="domain">
    <text evidence="5">The Asp-Asp-Xaa-Xaa-Asp/Glu (DDXXD/E) motif is important for the catalytic activity, presumably through binding to Mg(2+).</text>
</comment>
<comment type="similarity">
    <text evidence="5">Belongs to the terpene synthase family. Tpsa subfamily.</text>
</comment>
<comment type="sequence caution" evidence="5">
    <conflict type="erroneous initiation">
        <sequence resource="EMBL-CDS" id="AAF97286"/>
    </conflict>
    <text>Truncated N-terminus.</text>
</comment>
<proteinExistence type="evidence at transcript level"/>
<feature type="chain" id="PRO_0000403712" description="Terpenoid synthase 22">
    <location>
        <begin position="1"/>
        <end position="603"/>
    </location>
</feature>
<feature type="short sequence motif" description="DDXXD motif">
    <location>
        <begin position="356"/>
        <end position="360"/>
    </location>
</feature>
<feature type="binding site" evidence="1">
    <location>
        <position position="356"/>
    </location>
    <ligand>
        <name>Mg(2+)</name>
        <dbReference type="ChEBI" id="CHEBI:18420"/>
        <label>1</label>
    </ligand>
</feature>
<feature type="binding site" evidence="1">
    <location>
        <position position="356"/>
    </location>
    <ligand>
        <name>Mg(2+)</name>
        <dbReference type="ChEBI" id="CHEBI:18420"/>
        <label>2</label>
    </ligand>
</feature>
<feature type="binding site" evidence="1">
    <location>
        <position position="360"/>
    </location>
    <ligand>
        <name>Mg(2+)</name>
        <dbReference type="ChEBI" id="CHEBI:18420"/>
        <label>1</label>
    </ligand>
</feature>
<feature type="binding site" evidence="1">
    <location>
        <position position="360"/>
    </location>
    <ligand>
        <name>Mg(2+)</name>
        <dbReference type="ChEBI" id="CHEBI:18420"/>
        <label>2</label>
    </ligand>
</feature>
<feature type="binding site" evidence="1">
    <location>
        <position position="500"/>
    </location>
    <ligand>
        <name>Mg(2+)</name>
        <dbReference type="ChEBI" id="CHEBI:18420"/>
        <label>3</label>
    </ligand>
</feature>
<feature type="binding site" evidence="1">
    <location>
        <position position="508"/>
    </location>
    <ligand>
        <name>Mg(2+)</name>
        <dbReference type="ChEBI" id="CHEBI:18420"/>
        <label>3</label>
    </ligand>
</feature>
<accession>Q9LQ27</accession>
<protein>
    <recommendedName>
        <fullName evidence="4">Terpenoid synthase 22</fullName>
        <shortName evidence="4">AtTPS22</shortName>
        <ecNumber>4.2.3.-</ecNumber>
    </recommendedName>
</protein>
<sequence length="603" mass="69875">MEAARMGFRAKTLPHLGNGTRLPLKTKLSLFPMHLLQNHTTLSRRSTKLNLCVKACSKTSGVESSRPLPHSAPDLWGDHILSVPTENSEFDTLETEIESIKPKVRNMLMSSHKTDKERICLIHLLICLGTFHYFEKEIEEILEQAFRKLDMLFTDEDDLETTAIMFEVFRLYGHKISCDVFDRFKGVDAKFKEHLVSDVRGMLQLYEAAHLATPFETILDEALSFTRYHLESLAGQQATAPHISRHILNALYKPRFLKMEIIAAREYIHFYQKEGHDETLLKFAKLNFNFCQLHYVRELKTLTKWWKDIDLPYKLPYIRDRLLETFIGVMAVYLEPHYSLGRIIATKVSQVIVVMDDTCDAYGTFSEVRSLIDSLERWDPGAIDKLPSCLRIVIQSIVETMEDIEREMKPRGRSSSVQDTVEEIKIMGRAYAEISKWARAGHVPTFDDYIELGLDSSGIRCFAMYSFISMEDCEENQTNAWFKSKPKMLRALSVIFRLTNDIAGFEEEMRRGEVVNGVNCYVKQHNVTKELAVREIKKMIRDNYKIMMEEFLTIKSVSRPILVRCFNIVRLVNLYYEEGDNFTNPNGKLKDLITSLFFHPLPL</sequence>
<dbReference type="EC" id="4.2.3.-"/>
<dbReference type="EMBL" id="AC010164">
    <property type="protein sequence ID" value="AAF97286.1"/>
    <property type="status" value="ALT_INIT"/>
    <property type="molecule type" value="Genomic_DNA"/>
</dbReference>
<dbReference type="EMBL" id="CP002684">
    <property type="protein sequence ID" value="AEE31620.1"/>
    <property type="molecule type" value="Genomic_DNA"/>
</dbReference>
<dbReference type="PIR" id="H86460">
    <property type="entry name" value="H86460"/>
</dbReference>
<dbReference type="RefSeq" id="NP_174635.1">
    <property type="nucleotide sequence ID" value="NM_103094.3"/>
</dbReference>
<dbReference type="SMR" id="Q9LQ27"/>
<dbReference type="FunCoup" id="Q9LQ27">
    <property type="interactions" value="22"/>
</dbReference>
<dbReference type="STRING" id="3702.Q9LQ27"/>
<dbReference type="PaxDb" id="3702-AT1G33750.1"/>
<dbReference type="ProteomicsDB" id="232496"/>
<dbReference type="EnsemblPlants" id="AT1G33750.1">
    <property type="protein sequence ID" value="AT1G33750.1"/>
    <property type="gene ID" value="AT1G33750"/>
</dbReference>
<dbReference type="GeneID" id="840266"/>
<dbReference type="Gramene" id="AT1G33750.1">
    <property type="protein sequence ID" value="AT1G33750.1"/>
    <property type="gene ID" value="AT1G33750"/>
</dbReference>
<dbReference type="KEGG" id="ath:AT1G33750"/>
<dbReference type="Araport" id="AT1G33750"/>
<dbReference type="TAIR" id="AT1G33750">
    <property type="gene designation" value="TPS22"/>
</dbReference>
<dbReference type="eggNOG" id="ENOG502QUCN">
    <property type="taxonomic scope" value="Eukaryota"/>
</dbReference>
<dbReference type="HOGENOM" id="CLU_003125_7_2_1"/>
<dbReference type="InParanoid" id="Q9LQ27"/>
<dbReference type="OMA" id="TRHIVAE"/>
<dbReference type="PhylomeDB" id="Q9LQ27"/>
<dbReference type="BioCyc" id="ARA:AT1G33750-MONOMER"/>
<dbReference type="UniPathway" id="UPA00213"/>
<dbReference type="PRO" id="PR:Q9LQ27"/>
<dbReference type="Proteomes" id="UP000006548">
    <property type="component" value="Chromosome 1"/>
</dbReference>
<dbReference type="ExpressionAtlas" id="Q9LQ27">
    <property type="expression patterns" value="baseline and differential"/>
</dbReference>
<dbReference type="GO" id="GO:0005737">
    <property type="term" value="C:cytoplasm"/>
    <property type="evidence" value="ECO:0007669"/>
    <property type="project" value="UniProtKB-SubCell"/>
</dbReference>
<dbReference type="GO" id="GO:0000287">
    <property type="term" value="F:magnesium ion binding"/>
    <property type="evidence" value="ECO:0007669"/>
    <property type="project" value="InterPro"/>
</dbReference>
<dbReference type="GO" id="GO:0010333">
    <property type="term" value="F:terpene synthase activity"/>
    <property type="evidence" value="ECO:0000314"/>
    <property type="project" value="UniProtKB"/>
</dbReference>
<dbReference type="GO" id="GO:0016102">
    <property type="term" value="P:diterpenoid biosynthetic process"/>
    <property type="evidence" value="ECO:0007669"/>
    <property type="project" value="InterPro"/>
</dbReference>
<dbReference type="GO" id="GO:0016114">
    <property type="term" value="P:terpenoid biosynthetic process"/>
    <property type="evidence" value="ECO:0000314"/>
    <property type="project" value="UniProtKB"/>
</dbReference>
<dbReference type="CDD" id="cd00684">
    <property type="entry name" value="Terpene_cyclase_plant_C1"/>
    <property type="match status" value="1"/>
</dbReference>
<dbReference type="FunFam" id="1.10.600.10:FF:000007">
    <property type="entry name" value="Isoprene synthase, chloroplastic"/>
    <property type="match status" value="1"/>
</dbReference>
<dbReference type="FunFam" id="1.50.10.130:FF:000001">
    <property type="entry name" value="Isoprene synthase, chloroplastic"/>
    <property type="match status" value="1"/>
</dbReference>
<dbReference type="Gene3D" id="1.10.600.10">
    <property type="entry name" value="Farnesyl Diphosphate Synthase"/>
    <property type="match status" value="1"/>
</dbReference>
<dbReference type="Gene3D" id="1.50.10.130">
    <property type="entry name" value="Terpene synthase, N-terminal domain"/>
    <property type="match status" value="1"/>
</dbReference>
<dbReference type="InterPro" id="IPR008949">
    <property type="entry name" value="Isoprenoid_synthase_dom_sf"/>
</dbReference>
<dbReference type="InterPro" id="IPR034741">
    <property type="entry name" value="Terpene_cyclase-like_1_C"/>
</dbReference>
<dbReference type="InterPro" id="IPR044814">
    <property type="entry name" value="Terpene_cyclase_plant_C1"/>
</dbReference>
<dbReference type="InterPro" id="IPR001906">
    <property type="entry name" value="Terpene_synth_N"/>
</dbReference>
<dbReference type="InterPro" id="IPR036965">
    <property type="entry name" value="Terpene_synth_N_sf"/>
</dbReference>
<dbReference type="InterPro" id="IPR050148">
    <property type="entry name" value="Terpene_synthase-like"/>
</dbReference>
<dbReference type="InterPro" id="IPR005630">
    <property type="entry name" value="Terpene_synthase_metal-bd"/>
</dbReference>
<dbReference type="InterPro" id="IPR008930">
    <property type="entry name" value="Terpenoid_cyclase/PrenylTrfase"/>
</dbReference>
<dbReference type="PANTHER" id="PTHR31225:SF93">
    <property type="entry name" value="ALPHA-HUMULENE_(-)-(E)-BETA-CARYOPHYLLENE SYNTHASE"/>
    <property type="match status" value="1"/>
</dbReference>
<dbReference type="PANTHER" id="PTHR31225">
    <property type="entry name" value="OS04G0344100 PROTEIN-RELATED"/>
    <property type="match status" value="1"/>
</dbReference>
<dbReference type="Pfam" id="PF01397">
    <property type="entry name" value="Terpene_synth"/>
    <property type="match status" value="1"/>
</dbReference>
<dbReference type="Pfam" id="PF03936">
    <property type="entry name" value="Terpene_synth_C"/>
    <property type="match status" value="1"/>
</dbReference>
<dbReference type="SFLD" id="SFLDS00005">
    <property type="entry name" value="Isoprenoid_Synthase_Type_I"/>
    <property type="match status" value="1"/>
</dbReference>
<dbReference type="SFLD" id="SFLDG01019">
    <property type="entry name" value="Terpene_Cyclase_Like_1_C_Termi"/>
    <property type="match status" value="1"/>
</dbReference>
<dbReference type="SUPFAM" id="SSF48239">
    <property type="entry name" value="Terpenoid cyclases/Protein prenyltransferases"/>
    <property type="match status" value="1"/>
</dbReference>
<dbReference type="SUPFAM" id="SSF48576">
    <property type="entry name" value="Terpenoid synthases"/>
    <property type="match status" value="1"/>
</dbReference>
<gene>
    <name evidence="4" type="primary">TPS22</name>
    <name evidence="6" type="ordered locus">At1g33750</name>
    <name evidence="7" type="ORF">F14M2.13</name>
</gene>
<name>TPS22_ARATH</name>
<keyword id="KW-0963">Cytoplasm</keyword>
<keyword id="KW-0456">Lyase</keyword>
<keyword id="KW-0460">Magnesium</keyword>
<keyword id="KW-0464">Manganese</keyword>
<keyword id="KW-0479">Metal-binding</keyword>
<keyword id="KW-1185">Reference proteome</keyword>
<organism>
    <name type="scientific">Arabidopsis thaliana</name>
    <name type="common">Mouse-ear cress</name>
    <dbReference type="NCBI Taxonomy" id="3702"/>
    <lineage>
        <taxon>Eukaryota</taxon>
        <taxon>Viridiplantae</taxon>
        <taxon>Streptophyta</taxon>
        <taxon>Embryophyta</taxon>
        <taxon>Tracheophyta</taxon>
        <taxon>Spermatophyta</taxon>
        <taxon>Magnoliopsida</taxon>
        <taxon>eudicotyledons</taxon>
        <taxon>Gunneridae</taxon>
        <taxon>Pentapetalae</taxon>
        <taxon>rosids</taxon>
        <taxon>malvids</taxon>
        <taxon>Brassicales</taxon>
        <taxon>Brassicaceae</taxon>
        <taxon>Camelineae</taxon>
        <taxon>Arabidopsis</taxon>
    </lineage>
</organism>
<evidence type="ECO:0000250" key="1">
    <source>
        <dbReference type="UniProtKB" id="Q40577"/>
    </source>
</evidence>
<evidence type="ECO:0000269" key="2">
    <source>
    </source>
</evidence>
<evidence type="ECO:0000269" key="3">
    <source>
    </source>
</evidence>
<evidence type="ECO:0000303" key="4">
    <source>
    </source>
</evidence>
<evidence type="ECO:0000305" key="5"/>
<evidence type="ECO:0000312" key="6">
    <source>
        <dbReference type="Araport" id="AT1G33750"/>
    </source>
</evidence>
<evidence type="ECO:0000312" key="7">
    <source>
        <dbReference type="EMBL" id="AAF97286.1"/>
    </source>
</evidence>
<reference key="1">
    <citation type="journal article" date="2000" name="Nature">
        <title>Sequence and analysis of chromosome 1 of the plant Arabidopsis thaliana.</title>
        <authorList>
            <person name="Theologis A."/>
            <person name="Ecker J.R."/>
            <person name="Palm C.J."/>
            <person name="Federspiel N.A."/>
            <person name="Kaul S."/>
            <person name="White O."/>
            <person name="Alonso J."/>
            <person name="Altafi H."/>
            <person name="Araujo R."/>
            <person name="Bowman C.L."/>
            <person name="Brooks S.Y."/>
            <person name="Buehler E."/>
            <person name="Chan A."/>
            <person name="Chao Q."/>
            <person name="Chen H."/>
            <person name="Cheuk R.F."/>
            <person name="Chin C.W."/>
            <person name="Chung M.K."/>
            <person name="Conn L."/>
            <person name="Conway A.B."/>
            <person name="Conway A.R."/>
            <person name="Creasy T.H."/>
            <person name="Dewar K."/>
            <person name="Dunn P."/>
            <person name="Etgu P."/>
            <person name="Feldblyum T.V."/>
            <person name="Feng J.-D."/>
            <person name="Fong B."/>
            <person name="Fujii C.Y."/>
            <person name="Gill J.E."/>
            <person name="Goldsmith A.D."/>
            <person name="Haas B."/>
            <person name="Hansen N.F."/>
            <person name="Hughes B."/>
            <person name="Huizar L."/>
            <person name="Hunter J.L."/>
            <person name="Jenkins J."/>
            <person name="Johnson-Hopson C."/>
            <person name="Khan S."/>
            <person name="Khaykin E."/>
            <person name="Kim C.J."/>
            <person name="Koo H.L."/>
            <person name="Kremenetskaia I."/>
            <person name="Kurtz D.B."/>
            <person name="Kwan A."/>
            <person name="Lam B."/>
            <person name="Langin-Hooper S."/>
            <person name="Lee A."/>
            <person name="Lee J.M."/>
            <person name="Lenz C.A."/>
            <person name="Li J.H."/>
            <person name="Li Y.-P."/>
            <person name="Lin X."/>
            <person name="Liu S.X."/>
            <person name="Liu Z.A."/>
            <person name="Luros J.S."/>
            <person name="Maiti R."/>
            <person name="Marziali A."/>
            <person name="Militscher J."/>
            <person name="Miranda M."/>
            <person name="Nguyen M."/>
            <person name="Nierman W.C."/>
            <person name="Osborne B.I."/>
            <person name="Pai G."/>
            <person name="Peterson J."/>
            <person name="Pham P.K."/>
            <person name="Rizzo M."/>
            <person name="Rooney T."/>
            <person name="Rowley D."/>
            <person name="Sakano H."/>
            <person name="Salzberg S.L."/>
            <person name="Schwartz J.R."/>
            <person name="Shinn P."/>
            <person name="Southwick A.M."/>
            <person name="Sun H."/>
            <person name="Tallon L.J."/>
            <person name="Tambunga G."/>
            <person name="Toriumi M.J."/>
            <person name="Town C.D."/>
            <person name="Utterback T."/>
            <person name="Van Aken S."/>
            <person name="Vaysberg M."/>
            <person name="Vysotskaia V.S."/>
            <person name="Walker M."/>
            <person name="Wu D."/>
            <person name="Yu G."/>
            <person name="Fraser C.M."/>
            <person name="Venter J.C."/>
            <person name="Davis R.W."/>
        </authorList>
    </citation>
    <scope>NUCLEOTIDE SEQUENCE [LARGE SCALE GENOMIC DNA]</scope>
    <source>
        <strain>cv. Columbia</strain>
    </source>
</reference>
<reference key="2">
    <citation type="journal article" date="2017" name="Plant J.">
        <title>Araport11: a complete reannotation of the Arabidopsis thaliana reference genome.</title>
        <authorList>
            <person name="Cheng C.Y."/>
            <person name="Krishnakumar V."/>
            <person name="Chan A.P."/>
            <person name="Thibaud-Nissen F."/>
            <person name="Schobel S."/>
            <person name="Town C.D."/>
        </authorList>
    </citation>
    <scope>GENOME REANNOTATION</scope>
    <source>
        <strain>cv. Columbia</strain>
    </source>
</reference>
<reference key="3">
    <citation type="journal article" date="2002" name="Mol. Genet. Genomics">
        <title>Genomic analysis of the terpenoid synthase (AtTPS) gene family of Arabidopsis thaliana.</title>
        <authorList>
            <person name="Aubourg S."/>
            <person name="Lecharny A."/>
            <person name="Bohlmann J."/>
        </authorList>
    </citation>
    <scope>GENE FAMILY</scope>
    <scope>NOMENCLATURE</scope>
</reference>
<reference key="4">
    <citation type="journal article" date="2003" name="Plant Cell">
        <title>Biosynthesis and emission of terpenoid volatiles from Arabidopsis flowers.</title>
        <authorList>
            <person name="Chen F."/>
            <person name="Tholl D."/>
            <person name="D'Auria J.C."/>
            <person name="Farooq A."/>
            <person name="Pichersky E."/>
            <person name="Gershenzon J."/>
        </authorList>
    </citation>
    <scope>TISSUE SPECIFICITY</scope>
</reference>
<reference key="5">
    <citation type="journal article" date="2003" name="Plant Mol. Biol.">
        <title>Genome organization in Arabidopsis thaliana: a survey for genes involved in isoprenoid and chlorophyll metabolism.</title>
        <authorList>
            <person name="Lange B.M."/>
            <person name="Ghassemian M."/>
        </authorList>
    </citation>
    <scope>GENE FAMILY</scope>
</reference>
<reference key="6">
    <citation type="journal article" date="2016" name="Front. Plant Sci.">
        <title>Identification of a dolabellane type diterpene synthase and other root-expressed diterpene synthases in Arabidopsis.</title>
        <authorList>
            <person name="Wang Q."/>
            <person name="Jia M."/>
            <person name="Huh J.H."/>
            <person name="Muchlinski A."/>
            <person name="Peters R.J."/>
            <person name="Tholl D."/>
        </authorList>
    </citation>
    <scope>FUNCTION</scope>
    <source>
        <strain>cv. Columbia</strain>
    </source>
</reference>